<dbReference type="EC" id="2.3.1.274" evidence="1"/>
<dbReference type="EMBL" id="BA000017">
    <property type="protein sequence ID" value="BAB57391.1"/>
    <property type="molecule type" value="Genomic_DNA"/>
</dbReference>
<dbReference type="RefSeq" id="WP_000239753.1">
    <property type="nucleotide sequence ID" value="NC_002758.2"/>
</dbReference>
<dbReference type="SMR" id="P65738"/>
<dbReference type="KEGG" id="sav:SAV1229"/>
<dbReference type="HOGENOM" id="CLU_039379_1_1_9"/>
<dbReference type="PhylomeDB" id="P65738"/>
<dbReference type="UniPathway" id="UPA00085"/>
<dbReference type="Proteomes" id="UP000002481">
    <property type="component" value="Chromosome"/>
</dbReference>
<dbReference type="GO" id="GO:0005737">
    <property type="term" value="C:cytoplasm"/>
    <property type="evidence" value="ECO:0007669"/>
    <property type="project" value="UniProtKB-SubCell"/>
</dbReference>
<dbReference type="GO" id="GO:0043811">
    <property type="term" value="F:phosphate:acyl-[acyl carrier protein] acyltransferase activity"/>
    <property type="evidence" value="ECO:0007669"/>
    <property type="project" value="UniProtKB-UniRule"/>
</dbReference>
<dbReference type="GO" id="GO:0006633">
    <property type="term" value="P:fatty acid biosynthetic process"/>
    <property type="evidence" value="ECO:0007669"/>
    <property type="project" value="UniProtKB-UniRule"/>
</dbReference>
<dbReference type="GO" id="GO:0008654">
    <property type="term" value="P:phospholipid biosynthetic process"/>
    <property type="evidence" value="ECO:0007669"/>
    <property type="project" value="UniProtKB-KW"/>
</dbReference>
<dbReference type="Gene3D" id="3.40.718.10">
    <property type="entry name" value="Isopropylmalate Dehydrogenase"/>
    <property type="match status" value="1"/>
</dbReference>
<dbReference type="HAMAP" id="MF_00019">
    <property type="entry name" value="PlsX"/>
    <property type="match status" value="1"/>
</dbReference>
<dbReference type="InterPro" id="IPR003664">
    <property type="entry name" value="FA_synthesis"/>
</dbReference>
<dbReference type="InterPro" id="IPR012281">
    <property type="entry name" value="Phospholipid_synth_PlsX-like"/>
</dbReference>
<dbReference type="NCBIfam" id="TIGR00182">
    <property type="entry name" value="plsX"/>
    <property type="match status" value="1"/>
</dbReference>
<dbReference type="PANTHER" id="PTHR30100">
    <property type="entry name" value="FATTY ACID/PHOSPHOLIPID SYNTHESIS PROTEIN PLSX"/>
    <property type="match status" value="1"/>
</dbReference>
<dbReference type="PANTHER" id="PTHR30100:SF1">
    <property type="entry name" value="PHOSPHATE ACYLTRANSFERASE"/>
    <property type="match status" value="1"/>
</dbReference>
<dbReference type="Pfam" id="PF02504">
    <property type="entry name" value="FA_synthesis"/>
    <property type="match status" value="1"/>
</dbReference>
<dbReference type="PIRSF" id="PIRSF002465">
    <property type="entry name" value="Phsphlp_syn_PlsX"/>
    <property type="match status" value="1"/>
</dbReference>
<dbReference type="SUPFAM" id="SSF53659">
    <property type="entry name" value="Isocitrate/Isopropylmalate dehydrogenase-like"/>
    <property type="match status" value="1"/>
</dbReference>
<feature type="chain" id="PRO_0000189936" description="Phosphate acyltransferase">
    <location>
        <begin position="1"/>
        <end position="328"/>
    </location>
</feature>
<keyword id="KW-0963">Cytoplasm</keyword>
<keyword id="KW-0444">Lipid biosynthesis</keyword>
<keyword id="KW-0443">Lipid metabolism</keyword>
<keyword id="KW-0594">Phospholipid biosynthesis</keyword>
<keyword id="KW-1208">Phospholipid metabolism</keyword>
<keyword id="KW-0808">Transferase</keyword>
<reference key="1">
    <citation type="journal article" date="2001" name="Lancet">
        <title>Whole genome sequencing of meticillin-resistant Staphylococcus aureus.</title>
        <authorList>
            <person name="Kuroda M."/>
            <person name="Ohta T."/>
            <person name="Uchiyama I."/>
            <person name="Baba T."/>
            <person name="Yuzawa H."/>
            <person name="Kobayashi I."/>
            <person name="Cui L."/>
            <person name="Oguchi A."/>
            <person name="Aoki K."/>
            <person name="Nagai Y."/>
            <person name="Lian J.-Q."/>
            <person name="Ito T."/>
            <person name="Kanamori M."/>
            <person name="Matsumaru H."/>
            <person name="Maruyama A."/>
            <person name="Murakami H."/>
            <person name="Hosoyama A."/>
            <person name="Mizutani-Ui Y."/>
            <person name="Takahashi N.K."/>
            <person name="Sawano T."/>
            <person name="Inoue R."/>
            <person name="Kaito C."/>
            <person name="Sekimizu K."/>
            <person name="Hirakawa H."/>
            <person name="Kuhara S."/>
            <person name="Goto S."/>
            <person name="Yabuzaki J."/>
            <person name="Kanehisa M."/>
            <person name="Yamashita A."/>
            <person name="Oshima K."/>
            <person name="Furuya K."/>
            <person name="Yoshino C."/>
            <person name="Shiba T."/>
            <person name="Hattori M."/>
            <person name="Ogasawara N."/>
            <person name="Hayashi H."/>
            <person name="Hiramatsu K."/>
        </authorList>
    </citation>
    <scope>NUCLEOTIDE SEQUENCE [LARGE SCALE GENOMIC DNA]</scope>
    <source>
        <strain>Mu50 / ATCC 700699</strain>
    </source>
</reference>
<proteinExistence type="inferred from homology"/>
<protein>
    <recommendedName>
        <fullName evidence="1">Phosphate acyltransferase</fullName>
        <ecNumber evidence="1">2.3.1.274</ecNumber>
    </recommendedName>
    <alternativeName>
        <fullName evidence="1">Acyl-ACP phosphotransacylase</fullName>
    </alternativeName>
    <alternativeName>
        <fullName evidence="1">Acyl-[acyl-carrier-protein]--phosphate acyltransferase</fullName>
    </alternativeName>
    <alternativeName>
        <fullName evidence="1">Phosphate-acyl-ACP acyltransferase</fullName>
    </alternativeName>
</protein>
<gene>
    <name evidence="1" type="primary">plsX</name>
    <name type="ordered locus">SAV1229</name>
</gene>
<name>PLSX_STAAM</name>
<accession>P65738</accession>
<accession>Q99UN9</accession>
<comment type="function">
    <text evidence="1">Catalyzes the reversible formation of acyl-phosphate (acyl-PO(4)) from acyl-[acyl-carrier-protein] (acyl-ACP). This enzyme utilizes acyl-ACP as fatty acyl donor, but not acyl-CoA.</text>
</comment>
<comment type="catalytic activity">
    <reaction evidence="1">
        <text>a fatty acyl-[ACP] + phosphate = an acyl phosphate + holo-[ACP]</text>
        <dbReference type="Rhea" id="RHEA:42292"/>
        <dbReference type="Rhea" id="RHEA-COMP:9685"/>
        <dbReference type="Rhea" id="RHEA-COMP:14125"/>
        <dbReference type="ChEBI" id="CHEBI:43474"/>
        <dbReference type="ChEBI" id="CHEBI:59918"/>
        <dbReference type="ChEBI" id="CHEBI:64479"/>
        <dbReference type="ChEBI" id="CHEBI:138651"/>
        <dbReference type="EC" id="2.3.1.274"/>
    </reaction>
</comment>
<comment type="pathway">
    <text evidence="1">Lipid metabolism; phospholipid metabolism.</text>
</comment>
<comment type="subunit">
    <text evidence="1">Homodimer. Probably interacts with PlsY.</text>
</comment>
<comment type="subcellular location">
    <subcellularLocation>
        <location evidence="1">Cytoplasm</location>
    </subcellularLocation>
    <text evidence="1">Associated with the membrane possibly through PlsY.</text>
</comment>
<comment type="similarity">
    <text evidence="1">Belongs to the PlsX family.</text>
</comment>
<sequence length="328" mass="35451">MVKLAIDMMGGDNAPDIVLEAVQKAVEDFKNLEIMLFGDEKKYNLNHERIEFRHCSEKIEMEDEPVRAIKRKKDSSMVKMAEAVKSGEADGCVSAGNTGALMSVGLFIVGRIKGVARPALVVTLPTIDGKGFVFLDVGANADAKPEHLLQYAQLGDIYAQKIRGIDNPKISLLNIGTEPAKGNSLTKKSFELLNQDHSLNFVGNIEAKTLMDGDTDVVVTDGYTGNMVLKNLEGTAKSIGKMLKDTIMSSTKNKLAGAILKKDLAEFAKKMDYSEYGGSVLLGLEGTVVKAHGSSNAKAFYSAIRQAKIAGEQNIVQTMKETVGESNE</sequence>
<organism>
    <name type="scientific">Staphylococcus aureus (strain Mu50 / ATCC 700699)</name>
    <dbReference type="NCBI Taxonomy" id="158878"/>
    <lineage>
        <taxon>Bacteria</taxon>
        <taxon>Bacillati</taxon>
        <taxon>Bacillota</taxon>
        <taxon>Bacilli</taxon>
        <taxon>Bacillales</taxon>
        <taxon>Staphylococcaceae</taxon>
        <taxon>Staphylococcus</taxon>
    </lineage>
</organism>
<evidence type="ECO:0000255" key="1">
    <source>
        <dbReference type="HAMAP-Rule" id="MF_00019"/>
    </source>
</evidence>